<name>ALR_LACPL</name>
<sequence>MVVIGEHRHTQVTVDLQAIKTNISNEMAQKDELTELWAVVKANGYGHGIIQVAQAAKEAGATGFCVAILDEALALRAAGFAEPILVLGITEPEYAPLVAEKDISLAVGTQDWLTTAAAILAANQVTTPLHVHLALDTGMGRIGFQTPEELATAVTTLRQPQSPFDFEGIFTHFATADQADDTYFTHQLNNWKHLIAVVDELPRYVHVSNSATSLWHQACNGNMVRFGVALYGLNPSGRELSAPYPLQPALSLTARLTFVKRLARGKSVSYGATYTAAQDEWIGTVPIGYADGYERRLQGFHVLVDGEFCEIVGRVCMDQLMVRLPHEVPVGAKVTLVGTDGARTISLQDIADYCGTIHYEIACGLAPRVPRVYID</sequence>
<comment type="function">
    <text evidence="1">Catalyzes the interconversion of L-alanine and D-alanine. May also act on other amino acids.</text>
</comment>
<comment type="catalytic activity">
    <reaction evidence="1">
        <text>L-alanine = D-alanine</text>
        <dbReference type="Rhea" id="RHEA:20249"/>
        <dbReference type="ChEBI" id="CHEBI:57416"/>
        <dbReference type="ChEBI" id="CHEBI:57972"/>
        <dbReference type="EC" id="5.1.1.1"/>
    </reaction>
</comment>
<comment type="cofactor">
    <cofactor evidence="1">
        <name>pyridoxal 5'-phosphate</name>
        <dbReference type="ChEBI" id="CHEBI:597326"/>
    </cofactor>
</comment>
<comment type="pathway">
    <text evidence="1">Amino-acid biosynthesis; D-alanine biosynthesis; D-alanine from L-alanine: step 1/1.</text>
</comment>
<comment type="similarity">
    <text evidence="1">Belongs to the alanine racemase family.</text>
</comment>
<proteinExistence type="inferred from homology"/>
<accession>O08445</accession>
<accession>F9UKZ8</accession>
<feature type="chain" id="PRO_0000114528" description="Alanine racemase">
    <location>
        <begin position="1"/>
        <end position="375"/>
    </location>
</feature>
<feature type="active site" description="Proton acceptor; specific for D-alanine" evidence="1">
    <location>
        <position position="41"/>
    </location>
</feature>
<feature type="active site" description="Proton acceptor; specific for L-alanine" evidence="1">
    <location>
        <position position="270"/>
    </location>
</feature>
<feature type="binding site" evidence="1">
    <location>
        <position position="141"/>
    </location>
    <ligand>
        <name>substrate</name>
    </ligand>
</feature>
<feature type="binding site" evidence="1">
    <location>
        <position position="317"/>
    </location>
    <ligand>
        <name>substrate</name>
    </ligand>
</feature>
<feature type="modified residue" description="N6-(pyridoxal phosphate)lysine" evidence="1">
    <location>
        <position position="41"/>
    </location>
</feature>
<keyword id="KW-0413">Isomerase</keyword>
<keyword id="KW-0663">Pyridoxal phosphate</keyword>
<keyword id="KW-1185">Reference proteome</keyword>
<gene>
    <name type="primary">alr</name>
    <name type="ordered locus">lp_0523</name>
</gene>
<evidence type="ECO:0000255" key="1">
    <source>
        <dbReference type="HAMAP-Rule" id="MF_01201"/>
    </source>
</evidence>
<dbReference type="EC" id="5.1.1.1" evidence="1"/>
<dbReference type="EMBL" id="Y08941">
    <property type="protein sequence ID" value="CAA70140.1"/>
    <property type="molecule type" value="Genomic_DNA"/>
</dbReference>
<dbReference type="EMBL" id="AL935263">
    <property type="protein sequence ID" value="CCC78013.1"/>
    <property type="molecule type" value="Genomic_DNA"/>
</dbReference>
<dbReference type="RefSeq" id="WP_003642062.1">
    <property type="nucleotide sequence ID" value="NC_004567.2"/>
</dbReference>
<dbReference type="RefSeq" id="YP_004888527.1">
    <property type="nucleotide sequence ID" value="NC_004567.2"/>
</dbReference>
<dbReference type="SMR" id="O08445"/>
<dbReference type="STRING" id="220668.lp_0523"/>
<dbReference type="EnsemblBacteria" id="CCC78013">
    <property type="protein sequence ID" value="CCC78013"/>
    <property type="gene ID" value="lp_0523"/>
</dbReference>
<dbReference type="GeneID" id="77217129"/>
<dbReference type="KEGG" id="lpl:lp_0523"/>
<dbReference type="PATRIC" id="fig|220668.9.peg.431"/>
<dbReference type="eggNOG" id="COG0787">
    <property type="taxonomic scope" value="Bacteria"/>
</dbReference>
<dbReference type="HOGENOM" id="CLU_028393_2_1_9"/>
<dbReference type="OrthoDB" id="9813814at2"/>
<dbReference type="PhylomeDB" id="O08445"/>
<dbReference type="UniPathway" id="UPA00042">
    <property type="reaction ID" value="UER00497"/>
</dbReference>
<dbReference type="Proteomes" id="UP000000432">
    <property type="component" value="Chromosome"/>
</dbReference>
<dbReference type="GO" id="GO:0005829">
    <property type="term" value="C:cytosol"/>
    <property type="evidence" value="ECO:0007669"/>
    <property type="project" value="TreeGrafter"/>
</dbReference>
<dbReference type="GO" id="GO:0008784">
    <property type="term" value="F:alanine racemase activity"/>
    <property type="evidence" value="ECO:0007669"/>
    <property type="project" value="UniProtKB-UniRule"/>
</dbReference>
<dbReference type="GO" id="GO:0030170">
    <property type="term" value="F:pyridoxal phosphate binding"/>
    <property type="evidence" value="ECO:0007669"/>
    <property type="project" value="UniProtKB-UniRule"/>
</dbReference>
<dbReference type="GO" id="GO:0030632">
    <property type="term" value="P:D-alanine biosynthetic process"/>
    <property type="evidence" value="ECO:0007669"/>
    <property type="project" value="UniProtKB-UniRule"/>
</dbReference>
<dbReference type="GO" id="GO:0009252">
    <property type="term" value="P:peptidoglycan biosynthetic process"/>
    <property type="evidence" value="ECO:0007669"/>
    <property type="project" value="TreeGrafter"/>
</dbReference>
<dbReference type="CDD" id="cd00430">
    <property type="entry name" value="PLPDE_III_AR"/>
    <property type="match status" value="1"/>
</dbReference>
<dbReference type="FunFam" id="2.40.37.10:FF:000006">
    <property type="entry name" value="Alanine racemase"/>
    <property type="match status" value="1"/>
</dbReference>
<dbReference type="FunFam" id="3.20.20.10:FF:000002">
    <property type="entry name" value="Alanine racemase"/>
    <property type="match status" value="1"/>
</dbReference>
<dbReference type="Gene3D" id="3.20.20.10">
    <property type="entry name" value="Alanine racemase"/>
    <property type="match status" value="1"/>
</dbReference>
<dbReference type="Gene3D" id="2.40.37.10">
    <property type="entry name" value="Lyase, Ornithine Decarboxylase, Chain A, domain 1"/>
    <property type="match status" value="1"/>
</dbReference>
<dbReference type="HAMAP" id="MF_01201">
    <property type="entry name" value="Ala_racemase"/>
    <property type="match status" value="1"/>
</dbReference>
<dbReference type="InterPro" id="IPR000821">
    <property type="entry name" value="Ala_racemase"/>
</dbReference>
<dbReference type="InterPro" id="IPR009006">
    <property type="entry name" value="Ala_racemase/Decarboxylase_C"/>
</dbReference>
<dbReference type="InterPro" id="IPR011079">
    <property type="entry name" value="Ala_racemase_C"/>
</dbReference>
<dbReference type="InterPro" id="IPR001608">
    <property type="entry name" value="Ala_racemase_N"/>
</dbReference>
<dbReference type="InterPro" id="IPR020622">
    <property type="entry name" value="Ala_racemase_pyridoxalP-BS"/>
</dbReference>
<dbReference type="InterPro" id="IPR029066">
    <property type="entry name" value="PLP-binding_barrel"/>
</dbReference>
<dbReference type="NCBIfam" id="TIGR00492">
    <property type="entry name" value="alr"/>
    <property type="match status" value="1"/>
</dbReference>
<dbReference type="PANTHER" id="PTHR30511">
    <property type="entry name" value="ALANINE RACEMASE"/>
    <property type="match status" value="1"/>
</dbReference>
<dbReference type="PANTHER" id="PTHR30511:SF0">
    <property type="entry name" value="ALANINE RACEMASE, CATABOLIC-RELATED"/>
    <property type="match status" value="1"/>
</dbReference>
<dbReference type="Pfam" id="PF00842">
    <property type="entry name" value="Ala_racemase_C"/>
    <property type="match status" value="1"/>
</dbReference>
<dbReference type="Pfam" id="PF01168">
    <property type="entry name" value="Ala_racemase_N"/>
    <property type="match status" value="1"/>
</dbReference>
<dbReference type="PRINTS" id="PR00992">
    <property type="entry name" value="ALARACEMASE"/>
</dbReference>
<dbReference type="SMART" id="SM01005">
    <property type="entry name" value="Ala_racemase_C"/>
    <property type="match status" value="1"/>
</dbReference>
<dbReference type="SUPFAM" id="SSF50621">
    <property type="entry name" value="Alanine racemase C-terminal domain-like"/>
    <property type="match status" value="1"/>
</dbReference>
<dbReference type="SUPFAM" id="SSF51419">
    <property type="entry name" value="PLP-binding barrel"/>
    <property type="match status" value="1"/>
</dbReference>
<dbReference type="PROSITE" id="PS00395">
    <property type="entry name" value="ALANINE_RACEMASE"/>
    <property type="match status" value="1"/>
</dbReference>
<reference key="1">
    <citation type="journal article" date="1997" name="J. Bacteriol.">
        <title>The alanine racemase gene is essential for growth of Lactobacillus plantarum.</title>
        <authorList>
            <person name="Hols P."/>
            <person name="Defrenne C."/>
            <person name="Ferain T."/>
            <person name="Derzelle S."/>
            <person name="Delplace B."/>
            <person name="Delcour J."/>
        </authorList>
    </citation>
    <scope>NUCLEOTIDE SEQUENCE [GENOMIC DNA]</scope>
    <source>
        <strain>ATCC BAA-793 / NCIMB 8826 / WCFS1</strain>
    </source>
</reference>
<reference key="2">
    <citation type="journal article" date="2003" name="Proc. Natl. Acad. Sci. U.S.A.">
        <title>Complete genome sequence of Lactobacillus plantarum WCFS1.</title>
        <authorList>
            <person name="Kleerebezem M."/>
            <person name="Boekhorst J."/>
            <person name="van Kranenburg R."/>
            <person name="Molenaar D."/>
            <person name="Kuipers O.P."/>
            <person name="Leer R."/>
            <person name="Tarchini R."/>
            <person name="Peters S.A."/>
            <person name="Sandbrink H.M."/>
            <person name="Fiers M.W.E.J."/>
            <person name="Stiekema W."/>
            <person name="Klein Lankhorst R.M."/>
            <person name="Bron P.A."/>
            <person name="Hoffer S.M."/>
            <person name="Nierop Groot M.N."/>
            <person name="Kerkhoven R."/>
            <person name="De Vries M."/>
            <person name="Ursing B."/>
            <person name="De Vos W.M."/>
            <person name="Siezen R.J."/>
        </authorList>
    </citation>
    <scope>NUCLEOTIDE SEQUENCE [LARGE SCALE GENOMIC DNA]</scope>
    <source>
        <strain>ATCC BAA-793 / NCIMB 8826 / WCFS1</strain>
    </source>
</reference>
<reference key="3">
    <citation type="journal article" date="2012" name="J. Bacteriol.">
        <title>Complete resequencing and reannotation of the Lactobacillus plantarum WCFS1 genome.</title>
        <authorList>
            <person name="Siezen R.J."/>
            <person name="Francke C."/>
            <person name="Renckens B."/>
            <person name="Boekhorst J."/>
            <person name="Wels M."/>
            <person name="Kleerebezem M."/>
            <person name="van Hijum S.A."/>
        </authorList>
    </citation>
    <scope>NUCLEOTIDE SEQUENCE [LARGE SCALE GENOMIC DNA]</scope>
    <scope>GENOME REANNOTATION</scope>
    <source>
        <strain>ATCC BAA-793 / NCIMB 8826 / WCFS1</strain>
    </source>
</reference>
<protein>
    <recommendedName>
        <fullName evidence="1">Alanine racemase</fullName>
        <ecNumber evidence="1">5.1.1.1</ecNumber>
    </recommendedName>
</protein>
<organism>
    <name type="scientific">Lactiplantibacillus plantarum (strain ATCC BAA-793 / NCIMB 8826 / WCFS1)</name>
    <name type="common">Lactobacillus plantarum</name>
    <dbReference type="NCBI Taxonomy" id="220668"/>
    <lineage>
        <taxon>Bacteria</taxon>
        <taxon>Bacillati</taxon>
        <taxon>Bacillota</taxon>
        <taxon>Bacilli</taxon>
        <taxon>Lactobacillales</taxon>
        <taxon>Lactobacillaceae</taxon>
        <taxon>Lactiplantibacillus</taxon>
    </lineage>
</organism>